<accession>P12805</accession>
<accession>Q5U598</accession>
<reference key="1">
    <citation type="journal article" date="1989" name="Genes Dev.">
        <title>Poly(A) elongation during Xenopus oocyte maturation is required for translational recruitment and is mediated by a short sequence element.</title>
        <authorList>
            <person name="McGrew L.L."/>
            <person name="Dworkin-Rastl E."/>
            <person name="Dworkin M.B."/>
            <person name="Richter J.D."/>
        </authorList>
    </citation>
    <scope>NUCLEOTIDE SEQUENCE [MRNA]</scope>
</reference>
<reference key="2">
    <citation type="submission" date="2005-10" db="EMBL/GenBank/DDBJ databases">
        <authorList>
            <consortium name="NIH - Xenopus Gene Collection (XGC) project"/>
        </authorList>
    </citation>
    <scope>NUCLEOTIDE SEQUENCE [LARGE SCALE MRNA]</scope>
    <source>
        <tissue>Brain</tissue>
        <tissue>Embryo</tissue>
        <tissue>Oocyte</tissue>
    </source>
</reference>
<keyword id="KW-0217">Developmental protein</keyword>
<keyword id="KW-0507">mRNA processing</keyword>
<keyword id="KW-0508">mRNA splicing</keyword>
<keyword id="KW-0539">Nucleus</keyword>
<keyword id="KW-1185">Reference proteome</keyword>
<keyword id="KW-0747">Spliceosome</keyword>
<dbReference type="EMBL" id="X15243">
    <property type="protein sequence ID" value="CAA33321.1"/>
    <property type="molecule type" value="mRNA"/>
</dbReference>
<dbReference type="EMBL" id="BC040971">
    <property type="protein sequence ID" value="AAH40971.1"/>
    <property type="molecule type" value="mRNA"/>
</dbReference>
<dbReference type="EMBL" id="BC084786">
    <property type="protein sequence ID" value="AAH84786.1"/>
    <property type="molecule type" value="mRNA"/>
</dbReference>
<dbReference type="EMBL" id="BC106628">
    <property type="protein sequence ID" value="AAI06629.1"/>
    <property type="molecule type" value="mRNA"/>
</dbReference>
<dbReference type="PIR" id="S05955">
    <property type="entry name" value="S05955"/>
</dbReference>
<dbReference type="RefSeq" id="NP_001080048.1">
    <property type="nucleotide sequence ID" value="NM_001086579.1"/>
</dbReference>
<dbReference type="RefSeq" id="XP_018089545.1">
    <property type="nucleotide sequence ID" value="XM_018234056.1"/>
</dbReference>
<dbReference type="RefSeq" id="XP_018089546.1">
    <property type="nucleotide sequence ID" value="XM_018234057.1"/>
</dbReference>
<dbReference type="SMR" id="P12805"/>
<dbReference type="DNASU" id="379740"/>
<dbReference type="GeneID" id="108703088"/>
<dbReference type="GeneID" id="379740"/>
<dbReference type="KEGG" id="xla:108703088"/>
<dbReference type="KEGG" id="xla:379740"/>
<dbReference type="CTD" id="108703088"/>
<dbReference type="CTD" id="379740"/>
<dbReference type="OMA" id="MGESWRM"/>
<dbReference type="OrthoDB" id="277109at2759"/>
<dbReference type="Proteomes" id="UP000186698">
    <property type="component" value="Chromosome 9_10L"/>
</dbReference>
<dbReference type="Proteomes" id="UP000186698">
    <property type="component" value="Chromosome 9_10S"/>
</dbReference>
<dbReference type="Bgee" id="108703088">
    <property type="expression patterns" value="Expressed in blastula and 19 other cell types or tissues"/>
</dbReference>
<dbReference type="GO" id="GO:0005681">
    <property type="term" value="C:spliceosomal complex"/>
    <property type="evidence" value="ECO:0000318"/>
    <property type="project" value="GO_Central"/>
</dbReference>
<dbReference type="GO" id="GO:0000398">
    <property type="term" value="P:mRNA splicing, via spliceosome"/>
    <property type="evidence" value="ECO:0000318"/>
    <property type="project" value="GO_Central"/>
</dbReference>
<dbReference type="InterPro" id="IPR001748">
    <property type="entry name" value="BUD31"/>
</dbReference>
<dbReference type="InterPro" id="IPR018230">
    <property type="entry name" value="BUD31/G10-rel_CS"/>
</dbReference>
<dbReference type="PANTHER" id="PTHR19411:SF0">
    <property type="entry name" value="PROTEIN BUD31 HOMOLOG"/>
    <property type="match status" value="1"/>
</dbReference>
<dbReference type="PANTHER" id="PTHR19411">
    <property type="entry name" value="PROTEIN BUD31-RELATED"/>
    <property type="match status" value="1"/>
</dbReference>
<dbReference type="Pfam" id="PF01125">
    <property type="entry name" value="BUD31"/>
    <property type="match status" value="1"/>
</dbReference>
<dbReference type="PRINTS" id="PR00322">
    <property type="entry name" value="G10"/>
</dbReference>
<dbReference type="PROSITE" id="PS00997">
    <property type="entry name" value="G10_1"/>
    <property type="match status" value="1"/>
</dbReference>
<dbReference type="PROSITE" id="PS00998">
    <property type="entry name" value="G10_2"/>
    <property type="match status" value="1"/>
</dbReference>
<sequence length="144" mass="17040">MPKVKRSRKPPPDGWELIEPTLDELDQKMREAETDPHEGKRKVESLWPIFRIHHQKTRYIFDLFYKRKAISRELYDYCIREGYADKNLIAKWKKQGYENLCCLRCIQTRDTNFGTNCICRVPKTKLEVGRIIECTHCGCRGCSG</sequence>
<name>BUD31_XENLA</name>
<feature type="chain" id="PRO_0000193900" description="Protein BUD31 homolog">
    <location>
        <begin position="1"/>
        <end position="144"/>
    </location>
</feature>
<feature type="short sequence motif" description="Nuclear localization signal" evidence="2">
    <location>
        <begin position="2"/>
        <end position="10"/>
    </location>
</feature>
<gene>
    <name type="primary">bud31</name>
    <name type="synonym">g10</name>
</gene>
<comment type="function">
    <text evidence="1">Involved in pre-mRNA splicing process.</text>
</comment>
<comment type="subunit">
    <text evidence="1">Identified in the spliceosome C complex.</text>
</comment>
<comment type="subcellular location">
    <subcellularLocation>
        <location evidence="1">Nucleus</location>
    </subcellularLocation>
</comment>
<comment type="developmental stage">
    <text>Oocyte maturation is accompanied by the recruitment of specific maternal mRNAs into polysomes. G10 is an example of a protein which is translated at that time.</text>
</comment>
<comment type="similarity">
    <text evidence="3">Belongs to the BUD31 (G10) family.</text>
</comment>
<proteinExistence type="evidence at transcript level"/>
<evidence type="ECO:0000250" key="1">
    <source>
        <dbReference type="UniProtKB" id="P41223"/>
    </source>
</evidence>
<evidence type="ECO:0000255" key="2"/>
<evidence type="ECO:0000305" key="3"/>
<organism>
    <name type="scientific">Xenopus laevis</name>
    <name type="common">African clawed frog</name>
    <dbReference type="NCBI Taxonomy" id="8355"/>
    <lineage>
        <taxon>Eukaryota</taxon>
        <taxon>Metazoa</taxon>
        <taxon>Chordata</taxon>
        <taxon>Craniata</taxon>
        <taxon>Vertebrata</taxon>
        <taxon>Euteleostomi</taxon>
        <taxon>Amphibia</taxon>
        <taxon>Batrachia</taxon>
        <taxon>Anura</taxon>
        <taxon>Pipoidea</taxon>
        <taxon>Pipidae</taxon>
        <taxon>Xenopodinae</taxon>
        <taxon>Xenopus</taxon>
        <taxon>Xenopus</taxon>
    </lineage>
</organism>
<protein>
    <recommendedName>
        <fullName>Protein BUD31 homolog</fullName>
    </recommendedName>
    <alternativeName>
        <fullName>Protein G10</fullName>
    </alternativeName>
</protein>